<protein>
    <recommendedName>
        <fullName evidence="1">Small ribosomal subunit protein uS14</fullName>
    </recommendedName>
    <alternativeName>
        <fullName evidence="2">30S ribosomal protein S14 type Z</fullName>
    </alternativeName>
</protein>
<organism>
    <name type="scientific">Borrelia hermsii (strain HS1 / DAH)</name>
    <dbReference type="NCBI Taxonomy" id="314723"/>
    <lineage>
        <taxon>Bacteria</taxon>
        <taxon>Pseudomonadati</taxon>
        <taxon>Spirochaetota</taxon>
        <taxon>Spirochaetia</taxon>
        <taxon>Spirochaetales</taxon>
        <taxon>Borreliaceae</taxon>
        <taxon>Borrelia</taxon>
    </lineage>
</organism>
<name>RS14Z_BORHD</name>
<proteinExistence type="inferred from homology"/>
<keyword id="KW-0479">Metal-binding</keyword>
<keyword id="KW-0687">Ribonucleoprotein</keyword>
<keyword id="KW-0689">Ribosomal protein</keyword>
<keyword id="KW-0694">RNA-binding</keyword>
<keyword id="KW-0699">rRNA-binding</keyword>
<keyword id="KW-0862">Zinc</keyword>
<evidence type="ECO:0000255" key="1">
    <source>
        <dbReference type="HAMAP-Rule" id="MF_01364"/>
    </source>
</evidence>
<evidence type="ECO:0000305" key="2"/>
<accession>B2S0J4</accession>
<comment type="function">
    <text evidence="1">Binds 16S rRNA, required for the assembly of 30S particles and may also be responsible for determining the conformation of the 16S rRNA at the A site.</text>
</comment>
<comment type="cofactor">
    <cofactor evidence="1">
        <name>Zn(2+)</name>
        <dbReference type="ChEBI" id="CHEBI:29105"/>
    </cofactor>
    <text evidence="1">Binds 1 zinc ion per subunit.</text>
</comment>
<comment type="subunit">
    <text evidence="1">Part of the 30S ribosomal subunit. Contacts proteins S3 and S10.</text>
</comment>
<comment type="similarity">
    <text evidence="1">Belongs to the universal ribosomal protein uS14 family. Zinc-binding uS14 subfamily.</text>
</comment>
<dbReference type="EMBL" id="CP000048">
    <property type="protein sequence ID" value="AAX17000.1"/>
    <property type="molecule type" value="Genomic_DNA"/>
</dbReference>
<dbReference type="RefSeq" id="WP_011772438.1">
    <property type="nucleotide sequence ID" value="NZ_CP073136.1"/>
</dbReference>
<dbReference type="SMR" id="B2S0J4"/>
<dbReference type="KEGG" id="bhr:BH0491"/>
<dbReference type="HOGENOM" id="CLU_139869_3_0_12"/>
<dbReference type="Proteomes" id="UP000008834">
    <property type="component" value="Chromosome"/>
</dbReference>
<dbReference type="GO" id="GO:0005737">
    <property type="term" value="C:cytoplasm"/>
    <property type="evidence" value="ECO:0007669"/>
    <property type="project" value="UniProtKB-ARBA"/>
</dbReference>
<dbReference type="GO" id="GO:0015935">
    <property type="term" value="C:small ribosomal subunit"/>
    <property type="evidence" value="ECO:0007669"/>
    <property type="project" value="TreeGrafter"/>
</dbReference>
<dbReference type="GO" id="GO:0019843">
    <property type="term" value="F:rRNA binding"/>
    <property type="evidence" value="ECO:0007669"/>
    <property type="project" value="UniProtKB-UniRule"/>
</dbReference>
<dbReference type="GO" id="GO:0003735">
    <property type="term" value="F:structural constituent of ribosome"/>
    <property type="evidence" value="ECO:0007669"/>
    <property type="project" value="InterPro"/>
</dbReference>
<dbReference type="GO" id="GO:0008270">
    <property type="term" value="F:zinc ion binding"/>
    <property type="evidence" value="ECO:0007669"/>
    <property type="project" value="UniProtKB-UniRule"/>
</dbReference>
<dbReference type="GO" id="GO:0006412">
    <property type="term" value="P:translation"/>
    <property type="evidence" value="ECO:0007669"/>
    <property type="project" value="UniProtKB-UniRule"/>
</dbReference>
<dbReference type="FunFam" id="4.10.830.10:FF:000001">
    <property type="entry name" value="30S ribosomal protein S14 type Z"/>
    <property type="match status" value="1"/>
</dbReference>
<dbReference type="Gene3D" id="4.10.830.10">
    <property type="entry name" value="30s Ribosomal Protein S14, Chain N"/>
    <property type="match status" value="1"/>
</dbReference>
<dbReference type="HAMAP" id="MF_01364_B">
    <property type="entry name" value="Ribosomal_uS14_2_B"/>
    <property type="match status" value="1"/>
</dbReference>
<dbReference type="InterPro" id="IPR001209">
    <property type="entry name" value="Ribosomal_uS14"/>
</dbReference>
<dbReference type="InterPro" id="IPR023053">
    <property type="entry name" value="Ribosomal_uS14_bact"/>
</dbReference>
<dbReference type="InterPro" id="IPR018271">
    <property type="entry name" value="Ribosomal_uS14_CS"/>
</dbReference>
<dbReference type="InterPro" id="IPR043140">
    <property type="entry name" value="Ribosomal_uS14_sf"/>
</dbReference>
<dbReference type="NCBIfam" id="NF005974">
    <property type="entry name" value="PRK08061.1"/>
    <property type="match status" value="1"/>
</dbReference>
<dbReference type="PANTHER" id="PTHR19836">
    <property type="entry name" value="30S RIBOSOMAL PROTEIN S14"/>
    <property type="match status" value="1"/>
</dbReference>
<dbReference type="PANTHER" id="PTHR19836:SF19">
    <property type="entry name" value="SMALL RIBOSOMAL SUBUNIT PROTEIN US14M"/>
    <property type="match status" value="1"/>
</dbReference>
<dbReference type="Pfam" id="PF00253">
    <property type="entry name" value="Ribosomal_S14"/>
    <property type="match status" value="1"/>
</dbReference>
<dbReference type="SUPFAM" id="SSF57716">
    <property type="entry name" value="Glucocorticoid receptor-like (DNA-binding domain)"/>
    <property type="match status" value="1"/>
</dbReference>
<dbReference type="PROSITE" id="PS00527">
    <property type="entry name" value="RIBOSOMAL_S14"/>
    <property type="match status" value="1"/>
</dbReference>
<feature type="chain" id="PRO_1000143888" description="Small ribosomal subunit protein uS14">
    <location>
        <begin position="1"/>
        <end position="61"/>
    </location>
</feature>
<feature type="binding site" evidence="1">
    <location>
        <position position="24"/>
    </location>
    <ligand>
        <name>Zn(2+)</name>
        <dbReference type="ChEBI" id="CHEBI:29105"/>
    </ligand>
</feature>
<feature type="binding site" evidence="1">
    <location>
        <position position="27"/>
    </location>
    <ligand>
        <name>Zn(2+)</name>
        <dbReference type="ChEBI" id="CHEBI:29105"/>
    </ligand>
</feature>
<feature type="binding site" evidence="1">
    <location>
        <position position="40"/>
    </location>
    <ligand>
        <name>Zn(2+)</name>
        <dbReference type="ChEBI" id="CHEBI:29105"/>
    </ligand>
</feature>
<feature type="binding site" evidence="1">
    <location>
        <position position="43"/>
    </location>
    <ligand>
        <name>Zn(2+)</name>
        <dbReference type="ChEBI" id="CHEBI:29105"/>
    </ligand>
</feature>
<reference key="1">
    <citation type="submission" date="2004-12" db="EMBL/GenBank/DDBJ databases">
        <title>The genome sequence of Borrelia hermsii and Borrelia turicatae: comparative analysis of two agents of endemic N. America relapsing fever.</title>
        <authorList>
            <person name="Porcella S.F."/>
            <person name="Raffel S.J."/>
            <person name="Schrumpf M.E."/>
            <person name="Montgomery B."/>
            <person name="Smith T."/>
            <person name="Schwan T.G."/>
        </authorList>
    </citation>
    <scope>NUCLEOTIDE SEQUENCE [LARGE SCALE GENOMIC DNA]</scope>
    <source>
        <strain>HS1 / DAH</strain>
    </source>
</reference>
<gene>
    <name evidence="1" type="primary">rpsZ</name>
    <name evidence="1" type="synonym">rpsN</name>
    <name type="ordered locus">BH0491</name>
</gene>
<sequence>MAKKSMIVKALRKPKYKTRQKNRCKLCGRPKGYMRDFGMCRICFRNHASAGLIPGVSKSSW</sequence>